<geneLocation type="mitochondrion"/>
<proteinExistence type="inferred from homology"/>
<sequence length="261" mass="29675">MAHQAHAYHMVDPSPWPLTGAIAALLLTSGTAVWFHFHSLTLLTLGNILLLLTMYQWWRDIIREGTFQGHHTPPVQKGLRYGMILFITSEVFFFLGFFWAFYHASLAPTPELGGCWPPAGITTLDPFEVPLLNTAVLLASGVTVTWAHHSIMEGERKQTIQALTLTILLGFYFTFLQGMEYYEAPFTIADGVYGSTFFVATGFHGLHVIIGSTFLAVCLLRQVQYHFTSEHHFGFEAAAWYWHFVDVVWLFLYVSIYWWGS</sequence>
<evidence type="ECO:0000250" key="1">
    <source>
        <dbReference type="UniProtKB" id="P00415"/>
    </source>
</evidence>
<evidence type="ECO:0000250" key="2">
    <source>
        <dbReference type="UniProtKB" id="P00420"/>
    </source>
</evidence>
<evidence type="ECO:0000305" key="3"/>
<feature type="chain" id="PRO_0000183818" description="Cytochrome c oxidase subunit 3">
    <location>
        <begin position="1"/>
        <end position="261"/>
    </location>
</feature>
<feature type="topological domain" description="Mitochondrial matrix" evidence="1">
    <location>
        <begin position="1"/>
        <end position="15"/>
    </location>
</feature>
<feature type="transmembrane region" description="Helical; Name=I" evidence="1">
    <location>
        <begin position="16"/>
        <end position="34"/>
    </location>
</feature>
<feature type="topological domain" description="Mitochondrial intermembrane" evidence="1">
    <location>
        <begin position="35"/>
        <end position="40"/>
    </location>
</feature>
<feature type="transmembrane region" description="Helical; Name=II" evidence="1">
    <location>
        <begin position="41"/>
        <end position="66"/>
    </location>
</feature>
<feature type="topological domain" description="Mitochondrial matrix" evidence="1">
    <location>
        <begin position="67"/>
        <end position="72"/>
    </location>
</feature>
<feature type="transmembrane region" description="Helical; Name=III" evidence="1">
    <location>
        <begin position="73"/>
        <end position="105"/>
    </location>
</feature>
<feature type="topological domain" description="Mitochondrial intermembrane" evidence="1">
    <location>
        <begin position="106"/>
        <end position="128"/>
    </location>
</feature>
<feature type="transmembrane region" description="Helical; Name=IV" evidence="1">
    <location>
        <begin position="129"/>
        <end position="152"/>
    </location>
</feature>
<feature type="topological domain" description="Mitochondrial matrix" evidence="1">
    <location>
        <begin position="153"/>
        <end position="155"/>
    </location>
</feature>
<feature type="transmembrane region" description="Helical; Name=V" evidence="1">
    <location>
        <begin position="156"/>
        <end position="183"/>
    </location>
</feature>
<feature type="topological domain" description="Mitochondrial intermembrane" evidence="1">
    <location>
        <begin position="184"/>
        <end position="190"/>
    </location>
</feature>
<feature type="transmembrane region" description="Helical; Name=VI" evidence="1">
    <location>
        <begin position="191"/>
        <end position="223"/>
    </location>
</feature>
<feature type="topological domain" description="Mitochondrial matrix" evidence="1">
    <location>
        <begin position="224"/>
        <end position="232"/>
    </location>
</feature>
<feature type="transmembrane region" description="Helical; Name=VII" evidence="1">
    <location>
        <begin position="233"/>
        <end position="256"/>
    </location>
</feature>
<feature type="topological domain" description="Mitochondrial intermembrane" evidence="1">
    <location>
        <begin position="257"/>
        <end position="261"/>
    </location>
</feature>
<name>COX3_ONCMY</name>
<protein>
    <recommendedName>
        <fullName>Cytochrome c oxidase subunit 3</fullName>
        <ecNumber>7.1.1.9</ecNumber>
    </recommendedName>
    <alternativeName>
        <fullName>Cytochrome c oxidase polypeptide III</fullName>
    </alternativeName>
</protein>
<organism>
    <name type="scientific">Oncorhynchus mykiss</name>
    <name type="common">Rainbow trout</name>
    <name type="synonym">Salmo gairdneri</name>
    <dbReference type="NCBI Taxonomy" id="8022"/>
    <lineage>
        <taxon>Eukaryota</taxon>
        <taxon>Metazoa</taxon>
        <taxon>Chordata</taxon>
        <taxon>Craniata</taxon>
        <taxon>Vertebrata</taxon>
        <taxon>Euteleostomi</taxon>
        <taxon>Actinopterygii</taxon>
        <taxon>Neopterygii</taxon>
        <taxon>Teleostei</taxon>
        <taxon>Protacanthopterygii</taxon>
        <taxon>Salmoniformes</taxon>
        <taxon>Salmonidae</taxon>
        <taxon>Salmoninae</taxon>
        <taxon>Oncorhynchus</taxon>
    </lineage>
</organism>
<gene>
    <name type="primary">mt-co3</name>
    <name type="synonym">coiii</name>
    <name type="synonym">coxiii</name>
    <name type="synonym">mtco3</name>
</gene>
<reference key="1">
    <citation type="journal article" date="1995" name="J. Mol. Evol.">
        <title>The complete nucleotide sequence of the mitochondrial DNA genome of the rainbow trout, Oncorhynchus mykiss.</title>
        <authorList>
            <person name="Zardoya R."/>
            <person name="Garrido-Pertierra A."/>
            <person name="Bautista J.M."/>
        </authorList>
    </citation>
    <scope>NUCLEOTIDE SEQUENCE [GENOMIC DNA]</scope>
    <source>
        <tissue>Liver</tissue>
    </source>
</reference>
<reference key="2">
    <citation type="journal article" date="1989" name="J. Mol. Evol.">
        <title>Variation in salmonid mitochondrial DNA: evolutionary constraints and mechanisms of substitution.</title>
        <authorList>
            <person name="Thomas W.K."/>
            <person name="Beckenbach A.T."/>
        </authorList>
    </citation>
    <scope>PARTIAL NUCLEOTIDE SEQUENCE</scope>
</reference>
<dbReference type="EC" id="7.1.1.9"/>
<dbReference type="EMBL" id="L29771">
    <property type="protein sequence ID" value="AAB03353.1"/>
    <property type="molecule type" value="Genomic_DNA"/>
</dbReference>
<dbReference type="PIR" id="G34012">
    <property type="entry name" value="G34012"/>
</dbReference>
<dbReference type="RefSeq" id="NP_008296.1">
    <property type="nucleotide sequence ID" value="NC_001717.1"/>
</dbReference>
<dbReference type="SMR" id="P48172"/>
<dbReference type="GeneID" id="807973"/>
<dbReference type="KEGG" id="omy:807973"/>
<dbReference type="CTD" id="4514"/>
<dbReference type="OrthoDB" id="10050457at2759"/>
<dbReference type="Proteomes" id="UP000694395">
    <property type="component" value="Unplaced"/>
</dbReference>
<dbReference type="GO" id="GO:0005743">
    <property type="term" value="C:mitochondrial inner membrane"/>
    <property type="evidence" value="ECO:0007669"/>
    <property type="project" value="UniProtKB-SubCell"/>
</dbReference>
<dbReference type="GO" id="GO:0045277">
    <property type="term" value="C:respiratory chain complex IV"/>
    <property type="evidence" value="ECO:0000250"/>
    <property type="project" value="UniProtKB"/>
</dbReference>
<dbReference type="GO" id="GO:0004129">
    <property type="term" value="F:cytochrome-c oxidase activity"/>
    <property type="evidence" value="ECO:0007669"/>
    <property type="project" value="UniProtKB-EC"/>
</dbReference>
<dbReference type="GO" id="GO:0006123">
    <property type="term" value="P:mitochondrial electron transport, cytochrome c to oxygen"/>
    <property type="evidence" value="ECO:0007669"/>
    <property type="project" value="TreeGrafter"/>
</dbReference>
<dbReference type="CDD" id="cd01665">
    <property type="entry name" value="Cyt_c_Oxidase_III"/>
    <property type="match status" value="1"/>
</dbReference>
<dbReference type="FunFam" id="1.10.287.70:FF:000048">
    <property type="entry name" value="Cytochrome c oxidase subunit 3"/>
    <property type="match status" value="1"/>
</dbReference>
<dbReference type="FunFam" id="1.20.120.80:FF:000002">
    <property type="entry name" value="Cytochrome c oxidase subunit 3"/>
    <property type="match status" value="1"/>
</dbReference>
<dbReference type="Gene3D" id="1.10.287.70">
    <property type="match status" value="1"/>
</dbReference>
<dbReference type="Gene3D" id="1.20.120.80">
    <property type="entry name" value="Cytochrome c oxidase, subunit III, four-helix bundle"/>
    <property type="match status" value="1"/>
</dbReference>
<dbReference type="InterPro" id="IPR024791">
    <property type="entry name" value="Cyt_c/ubiquinol_Oxase_su3"/>
</dbReference>
<dbReference type="InterPro" id="IPR033945">
    <property type="entry name" value="Cyt_c_oxase_su3_dom"/>
</dbReference>
<dbReference type="InterPro" id="IPR000298">
    <property type="entry name" value="Cyt_c_oxidase-like_su3"/>
</dbReference>
<dbReference type="InterPro" id="IPR035973">
    <property type="entry name" value="Cyt_c_oxidase_su3-like_sf"/>
</dbReference>
<dbReference type="InterPro" id="IPR013833">
    <property type="entry name" value="Cyt_c_oxidase_su3_a-hlx"/>
</dbReference>
<dbReference type="PANTHER" id="PTHR11403:SF7">
    <property type="entry name" value="CYTOCHROME C OXIDASE SUBUNIT 3"/>
    <property type="match status" value="1"/>
</dbReference>
<dbReference type="PANTHER" id="PTHR11403">
    <property type="entry name" value="CYTOCHROME C OXIDASE SUBUNIT III"/>
    <property type="match status" value="1"/>
</dbReference>
<dbReference type="Pfam" id="PF00510">
    <property type="entry name" value="COX3"/>
    <property type="match status" value="1"/>
</dbReference>
<dbReference type="SUPFAM" id="SSF81452">
    <property type="entry name" value="Cytochrome c oxidase subunit III-like"/>
    <property type="match status" value="1"/>
</dbReference>
<dbReference type="PROSITE" id="PS50253">
    <property type="entry name" value="COX3"/>
    <property type="match status" value="1"/>
</dbReference>
<accession>P48172</accession>
<keyword id="KW-0472">Membrane</keyword>
<keyword id="KW-0496">Mitochondrion</keyword>
<keyword id="KW-0999">Mitochondrion inner membrane</keyword>
<keyword id="KW-1278">Translocase</keyword>
<keyword id="KW-0812">Transmembrane</keyword>
<keyword id="KW-1133">Transmembrane helix</keyword>
<comment type="function">
    <text evidence="2">Component of the cytochrome c oxidase, the last enzyme in the mitochondrial electron transport chain which drives oxidative phosphorylation. The respiratory chain contains 3 multisubunit complexes succinate dehydrogenase (complex II, CII), ubiquinol-cytochrome c oxidoreductase (cytochrome b-c1 complex, complex III, CIII) and cytochrome c oxidase (complex IV, CIV), that cooperate to transfer electrons derived from NADH and succinate to molecular oxygen, creating an electrochemical gradient over the inner membrane that drives transmembrane transport and the ATP synthase. Cytochrome c oxidase is the component of the respiratory chain that catalyzes the reduction of oxygen to water. Electrons originating from reduced cytochrome c in the intermembrane space (IMS) are transferred via the dinuclear copper A center (CU(A)) of subunit 2 and heme A of subunit 1 to the active site in subunit 1, a binuclear center (BNC) formed by heme A3 and copper B (CU(B)). The BNC reduces molecular oxygen to 2 water molecules using 4 electrons from cytochrome c in the IMS and 4 protons from the mitochondrial matrix.</text>
</comment>
<comment type="catalytic activity">
    <reaction evidence="2">
        <text>4 Fe(II)-[cytochrome c] + O2 + 8 H(+)(in) = 4 Fe(III)-[cytochrome c] + 2 H2O + 4 H(+)(out)</text>
        <dbReference type="Rhea" id="RHEA:11436"/>
        <dbReference type="Rhea" id="RHEA-COMP:10350"/>
        <dbReference type="Rhea" id="RHEA-COMP:14399"/>
        <dbReference type="ChEBI" id="CHEBI:15377"/>
        <dbReference type="ChEBI" id="CHEBI:15378"/>
        <dbReference type="ChEBI" id="CHEBI:15379"/>
        <dbReference type="ChEBI" id="CHEBI:29033"/>
        <dbReference type="ChEBI" id="CHEBI:29034"/>
        <dbReference type="EC" id="7.1.1.9"/>
    </reaction>
    <physiologicalReaction direction="left-to-right" evidence="2">
        <dbReference type="Rhea" id="RHEA:11437"/>
    </physiologicalReaction>
</comment>
<comment type="subunit">
    <text evidence="1">Component of the cytochrome c oxidase (complex IV, CIV), a multisubunit enzyme composed of 14 subunits. The complex is composed of a catalytic core of 3 subunits MT-CO1, MT-CO2 and MT-CO3, encoded in the mitochondrial DNA, and 11 supernumerary subunits COX4I, COX5A, COX5B, COX6A, COX6B, COX6C, COX7A, COX7B, COX7C, COX8 and NDUFA4, which are encoded in the nuclear genome. The complex exists as a monomer or a dimer and forms supercomplexes (SCs) in the inner mitochondrial membrane with NADH-ubiquinone oxidoreductase (complex I, CI) and ubiquinol-cytochrome c oxidoreductase (cytochrome b-c1 complex, complex III, CIII), resulting in different assemblies (supercomplex SCI(1)III(2)IV(1) and megacomplex MCI(2)III(2)IV(2)).</text>
</comment>
<comment type="subcellular location">
    <subcellularLocation>
        <location evidence="1">Mitochondrion inner membrane</location>
        <topology evidence="1">Multi-pass membrane protein</topology>
    </subcellularLocation>
</comment>
<comment type="similarity">
    <text evidence="3">Belongs to the cytochrome c oxidase subunit 3 family.</text>
</comment>